<proteinExistence type="inferred from homology"/>
<sequence>MNNELIIKGKKAKEASYTLSFASTNEKNNGLLKISESLIKRCDEILEENKKDLEKAIEKGTSNAMLDRLKLDEERVKSIANAVADVVKLDDPIGEVTSMFKRPNGLRIGVQRVPLGVVGIIYEARPNVTADAAALCLKTGNAVILRGGSEAINSNLKIVEIISDALKEASLPEGSVQILEDTSRETATDFMRLNDYLDVLIPRGGAGLIKAVVNNATVPVIETGVGNCHIYIDDEADINMGVDIIVNAKTSRPAVCNAAEKLLVNEKIAEEFLPVAIKALKEKGVEIRGCEKTKAIVNDINLATEEDWGKEYLDYILGVKVVKDLDEAISHINKYGTKHSESIVTKNYFNSEKFLQRVDAAAVYVNASTRFTDGGEFGFGAEIGISTQKLHARGPMGLKELTTNKYIIYGNGQIR</sequence>
<feature type="chain" id="PRO_1000049945" description="Gamma-glutamyl phosphate reductase">
    <location>
        <begin position="1"/>
        <end position="415"/>
    </location>
</feature>
<evidence type="ECO:0000255" key="1">
    <source>
        <dbReference type="HAMAP-Rule" id="MF_00412"/>
    </source>
</evidence>
<accession>Q0TM73</accession>
<name>PROA_CLOP1</name>
<reference key="1">
    <citation type="journal article" date="2006" name="Genome Res.">
        <title>Skewed genomic variability in strains of the toxigenic bacterial pathogen, Clostridium perfringens.</title>
        <authorList>
            <person name="Myers G.S.A."/>
            <person name="Rasko D.A."/>
            <person name="Cheung J.K."/>
            <person name="Ravel J."/>
            <person name="Seshadri R."/>
            <person name="DeBoy R.T."/>
            <person name="Ren Q."/>
            <person name="Varga J."/>
            <person name="Awad M.M."/>
            <person name="Brinkac L.M."/>
            <person name="Daugherty S.C."/>
            <person name="Haft D.H."/>
            <person name="Dodson R.J."/>
            <person name="Madupu R."/>
            <person name="Nelson W.C."/>
            <person name="Rosovitz M.J."/>
            <person name="Sullivan S.A."/>
            <person name="Khouri H."/>
            <person name="Dimitrov G.I."/>
            <person name="Watkins K.L."/>
            <person name="Mulligan S."/>
            <person name="Benton J."/>
            <person name="Radune D."/>
            <person name="Fisher D.J."/>
            <person name="Atkins H.S."/>
            <person name="Hiscox T."/>
            <person name="Jost B.H."/>
            <person name="Billington S.J."/>
            <person name="Songer J.G."/>
            <person name="McClane B.A."/>
            <person name="Titball R.W."/>
            <person name="Rood J.I."/>
            <person name="Melville S.B."/>
            <person name="Paulsen I.T."/>
        </authorList>
    </citation>
    <scope>NUCLEOTIDE SEQUENCE [LARGE SCALE GENOMIC DNA]</scope>
    <source>
        <strain>ATCC 13124 / DSM 756 / JCM 1290 / NCIMB 6125 / NCTC 8237 / S 107 / Type A</strain>
    </source>
</reference>
<comment type="function">
    <text evidence="1">Catalyzes the NADPH-dependent reduction of L-glutamate 5-phosphate into L-glutamate 5-semialdehyde and phosphate. The product spontaneously undergoes cyclization to form 1-pyrroline-5-carboxylate.</text>
</comment>
<comment type="catalytic activity">
    <reaction evidence="1">
        <text>L-glutamate 5-semialdehyde + phosphate + NADP(+) = L-glutamyl 5-phosphate + NADPH + H(+)</text>
        <dbReference type="Rhea" id="RHEA:19541"/>
        <dbReference type="ChEBI" id="CHEBI:15378"/>
        <dbReference type="ChEBI" id="CHEBI:43474"/>
        <dbReference type="ChEBI" id="CHEBI:57783"/>
        <dbReference type="ChEBI" id="CHEBI:58066"/>
        <dbReference type="ChEBI" id="CHEBI:58274"/>
        <dbReference type="ChEBI" id="CHEBI:58349"/>
        <dbReference type="EC" id="1.2.1.41"/>
    </reaction>
</comment>
<comment type="pathway">
    <text evidence="1">Amino-acid biosynthesis; L-proline biosynthesis; L-glutamate 5-semialdehyde from L-glutamate: step 2/2.</text>
</comment>
<comment type="subcellular location">
    <subcellularLocation>
        <location evidence="1">Cytoplasm</location>
    </subcellularLocation>
</comment>
<comment type="similarity">
    <text evidence="1">Belongs to the gamma-glutamyl phosphate reductase family.</text>
</comment>
<protein>
    <recommendedName>
        <fullName evidence="1">Gamma-glutamyl phosphate reductase</fullName>
        <shortName evidence="1">GPR</shortName>
        <ecNumber evidence="1">1.2.1.41</ecNumber>
    </recommendedName>
    <alternativeName>
        <fullName evidence="1">Glutamate-5-semialdehyde dehydrogenase</fullName>
    </alternativeName>
    <alternativeName>
        <fullName evidence="1">Glutamyl-gamma-semialdehyde dehydrogenase</fullName>
        <shortName evidence="1">GSA dehydrogenase</shortName>
    </alternativeName>
</protein>
<dbReference type="EC" id="1.2.1.41" evidence="1"/>
<dbReference type="EMBL" id="CP000246">
    <property type="protein sequence ID" value="ABG83893.1"/>
    <property type="molecule type" value="Genomic_DNA"/>
</dbReference>
<dbReference type="RefSeq" id="WP_011591172.1">
    <property type="nucleotide sequence ID" value="NC_008261.1"/>
</dbReference>
<dbReference type="SMR" id="Q0TM73"/>
<dbReference type="STRING" id="195103.CPF_2903"/>
<dbReference type="PaxDb" id="195103-CPF_2903"/>
<dbReference type="KEGG" id="cpf:CPF_2903"/>
<dbReference type="eggNOG" id="COG0014">
    <property type="taxonomic scope" value="Bacteria"/>
</dbReference>
<dbReference type="HOGENOM" id="CLU_030231_0_0_9"/>
<dbReference type="UniPathway" id="UPA00098">
    <property type="reaction ID" value="UER00360"/>
</dbReference>
<dbReference type="Proteomes" id="UP000001823">
    <property type="component" value="Chromosome"/>
</dbReference>
<dbReference type="GO" id="GO:0005737">
    <property type="term" value="C:cytoplasm"/>
    <property type="evidence" value="ECO:0007669"/>
    <property type="project" value="UniProtKB-SubCell"/>
</dbReference>
<dbReference type="GO" id="GO:0004350">
    <property type="term" value="F:glutamate-5-semialdehyde dehydrogenase activity"/>
    <property type="evidence" value="ECO:0007669"/>
    <property type="project" value="UniProtKB-UniRule"/>
</dbReference>
<dbReference type="GO" id="GO:0050661">
    <property type="term" value="F:NADP binding"/>
    <property type="evidence" value="ECO:0007669"/>
    <property type="project" value="InterPro"/>
</dbReference>
<dbReference type="GO" id="GO:0055129">
    <property type="term" value="P:L-proline biosynthetic process"/>
    <property type="evidence" value="ECO:0007669"/>
    <property type="project" value="UniProtKB-UniRule"/>
</dbReference>
<dbReference type="CDD" id="cd07079">
    <property type="entry name" value="ALDH_F18-19_ProA-GPR"/>
    <property type="match status" value="1"/>
</dbReference>
<dbReference type="FunFam" id="3.40.309.10:FF:000006">
    <property type="entry name" value="Gamma-glutamyl phosphate reductase"/>
    <property type="match status" value="1"/>
</dbReference>
<dbReference type="Gene3D" id="3.40.605.10">
    <property type="entry name" value="Aldehyde Dehydrogenase, Chain A, domain 1"/>
    <property type="match status" value="1"/>
</dbReference>
<dbReference type="Gene3D" id="3.40.309.10">
    <property type="entry name" value="Aldehyde Dehydrogenase, Chain A, domain 2"/>
    <property type="match status" value="1"/>
</dbReference>
<dbReference type="HAMAP" id="MF_00412">
    <property type="entry name" value="ProA"/>
    <property type="match status" value="1"/>
</dbReference>
<dbReference type="InterPro" id="IPR016161">
    <property type="entry name" value="Ald_DH/histidinol_DH"/>
</dbReference>
<dbReference type="InterPro" id="IPR016163">
    <property type="entry name" value="Ald_DH_C"/>
</dbReference>
<dbReference type="InterPro" id="IPR016162">
    <property type="entry name" value="Ald_DH_N"/>
</dbReference>
<dbReference type="InterPro" id="IPR015590">
    <property type="entry name" value="Aldehyde_DH_dom"/>
</dbReference>
<dbReference type="InterPro" id="IPR020593">
    <property type="entry name" value="G-glutamylP_reductase_CS"/>
</dbReference>
<dbReference type="InterPro" id="IPR012134">
    <property type="entry name" value="Glu-5-SA_DH"/>
</dbReference>
<dbReference type="InterPro" id="IPR000965">
    <property type="entry name" value="GPR_dom"/>
</dbReference>
<dbReference type="NCBIfam" id="NF001221">
    <property type="entry name" value="PRK00197.1"/>
    <property type="match status" value="1"/>
</dbReference>
<dbReference type="NCBIfam" id="TIGR00407">
    <property type="entry name" value="proA"/>
    <property type="match status" value="1"/>
</dbReference>
<dbReference type="PANTHER" id="PTHR11063:SF8">
    <property type="entry name" value="DELTA-1-PYRROLINE-5-CARBOXYLATE SYNTHASE"/>
    <property type="match status" value="1"/>
</dbReference>
<dbReference type="PANTHER" id="PTHR11063">
    <property type="entry name" value="GLUTAMATE SEMIALDEHYDE DEHYDROGENASE"/>
    <property type="match status" value="1"/>
</dbReference>
<dbReference type="Pfam" id="PF00171">
    <property type="entry name" value="Aldedh"/>
    <property type="match status" value="1"/>
</dbReference>
<dbReference type="PIRSF" id="PIRSF000151">
    <property type="entry name" value="GPR"/>
    <property type="match status" value="1"/>
</dbReference>
<dbReference type="SUPFAM" id="SSF53720">
    <property type="entry name" value="ALDH-like"/>
    <property type="match status" value="1"/>
</dbReference>
<dbReference type="PROSITE" id="PS01223">
    <property type="entry name" value="PROA"/>
    <property type="match status" value="1"/>
</dbReference>
<gene>
    <name evidence="1" type="primary">proA</name>
    <name type="ordered locus">CPF_2903</name>
</gene>
<keyword id="KW-0028">Amino-acid biosynthesis</keyword>
<keyword id="KW-0963">Cytoplasm</keyword>
<keyword id="KW-0521">NADP</keyword>
<keyword id="KW-0560">Oxidoreductase</keyword>
<keyword id="KW-0641">Proline biosynthesis</keyword>
<organism>
    <name type="scientific">Clostridium perfringens (strain ATCC 13124 / DSM 756 / JCM 1290 / NCIMB 6125 / NCTC 8237 / Type A)</name>
    <dbReference type="NCBI Taxonomy" id="195103"/>
    <lineage>
        <taxon>Bacteria</taxon>
        <taxon>Bacillati</taxon>
        <taxon>Bacillota</taxon>
        <taxon>Clostridia</taxon>
        <taxon>Eubacteriales</taxon>
        <taxon>Clostridiaceae</taxon>
        <taxon>Clostridium</taxon>
    </lineage>
</organism>